<organism>
    <name type="scientific">Schizosaccharomyces pombe (strain 972 / ATCC 24843)</name>
    <name type="common">Fission yeast</name>
    <dbReference type="NCBI Taxonomy" id="284812"/>
    <lineage>
        <taxon>Eukaryota</taxon>
        <taxon>Fungi</taxon>
        <taxon>Dikarya</taxon>
        <taxon>Ascomycota</taxon>
        <taxon>Taphrinomycotina</taxon>
        <taxon>Schizosaccharomycetes</taxon>
        <taxon>Schizosaccharomycetales</taxon>
        <taxon>Schizosaccharomycetaceae</taxon>
        <taxon>Schizosaccharomyces</taxon>
    </lineage>
</organism>
<evidence type="ECO:0000250" key="1">
    <source>
        <dbReference type="UniProtKB" id="P49842"/>
    </source>
</evidence>
<evidence type="ECO:0000269" key="2">
    <source>
    </source>
</evidence>
<evidence type="ECO:0000305" key="3"/>
<gene>
    <name type="primary">mug51</name>
    <name type="ORF">SPAC1834.09</name>
</gene>
<accession>Q9P7Q6</accession>
<proteinExistence type="evidence at protein level"/>
<sequence>MPALLKINKKKNGQTKIDRLFSKRRKTSLAIEKNHSKASMCTGQSPLNIISYNVPPLIVLRNKTIRNSIEVLVEEMFRDIQMRQQTNVLVAQCPRMIVETQLIGLFQSNYTSVAEELEQSIRTGDIRRLYLNRSDKFCGESCLILRPEFDKLFTYYLCKFKDQEHIYTLIFKLHKLLIENPLPSYTSEELKFNWEERRLLISMGFLILAGTDSYGISLPNLGIFTHILRNSRNDLSNYLKKRPYREVIESSLYNRNVSVACKKKNEAFFGWKFRLCDAIGAGLVDSFMTTCGRAFRLTKKGLEMKF</sequence>
<keyword id="KW-0067">ATP-binding</keyword>
<keyword id="KW-0418">Kinase</keyword>
<keyword id="KW-0469">Meiosis</keyword>
<keyword id="KW-0547">Nucleotide-binding</keyword>
<keyword id="KW-1185">Reference proteome</keyword>
<keyword id="KW-0723">Serine/threonine-protein kinase</keyword>
<keyword id="KW-0808">Transferase</keyword>
<comment type="function">
    <text evidence="1 2">Serine/threonine-protein kinase (By similarity). Has a role in meiosis (PubMed:16303567).</text>
</comment>
<comment type="catalytic activity">
    <reaction evidence="1">
        <text>L-seryl-[protein] + ATP = O-phospho-L-seryl-[protein] + ADP + H(+)</text>
        <dbReference type="Rhea" id="RHEA:17989"/>
        <dbReference type="Rhea" id="RHEA-COMP:9863"/>
        <dbReference type="Rhea" id="RHEA-COMP:11604"/>
        <dbReference type="ChEBI" id="CHEBI:15378"/>
        <dbReference type="ChEBI" id="CHEBI:29999"/>
        <dbReference type="ChEBI" id="CHEBI:30616"/>
        <dbReference type="ChEBI" id="CHEBI:83421"/>
        <dbReference type="ChEBI" id="CHEBI:456216"/>
        <dbReference type="EC" id="2.7.11.1"/>
    </reaction>
</comment>
<comment type="catalytic activity">
    <reaction evidence="1">
        <text>L-threonyl-[protein] + ATP = O-phospho-L-threonyl-[protein] + ADP + H(+)</text>
        <dbReference type="Rhea" id="RHEA:46608"/>
        <dbReference type="Rhea" id="RHEA-COMP:11060"/>
        <dbReference type="Rhea" id="RHEA-COMP:11605"/>
        <dbReference type="ChEBI" id="CHEBI:15378"/>
        <dbReference type="ChEBI" id="CHEBI:30013"/>
        <dbReference type="ChEBI" id="CHEBI:30616"/>
        <dbReference type="ChEBI" id="CHEBI:61977"/>
        <dbReference type="ChEBI" id="CHEBI:456216"/>
        <dbReference type="EC" id="2.7.11.1"/>
    </reaction>
</comment>
<comment type="similarity">
    <text evidence="3">Belongs to the STK19 family.</text>
</comment>
<protein>
    <recommendedName>
        <fullName>Serine/threonine-protein kinase mug51</fullName>
        <ecNumber evidence="1">2.7.11.1</ecNumber>
    </recommendedName>
    <alternativeName>
        <fullName>Meiotically up-regulated gene 51 protein</fullName>
    </alternativeName>
</protein>
<feature type="chain" id="PRO_0000116748" description="Serine/threonine-protein kinase mug51">
    <location>
        <begin position="1"/>
        <end position="306"/>
    </location>
</feature>
<name>MUG51_SCHPO</name>
<dbReference type="EC" id="2.7.11.1" evidence="1"/>
<dbReference type="EMBL" id="CU329670">
    <property type="protein sequence ID" value="CAB75777.1"/>
    <property type="molecule type" value="Genomic_DNA"/>
</dbReference>
<dbReference type="PIR" id="T50120">
    <property type="entry name" value="T50120"/>
</dbReference>
<dbReference type="RefSeq" id="NP_594688.1">
    <property type="nucleotide sequence ID" value="NM_001020117.2"/>
</dbReference>
<dbReference type="SMR" id="Q9P7Q6"/>
<dbReference type="BioGRID" id="278635">
    <property type="interactions" value="17"/>
</dbReference>
<dbReference type="PaxDb" id="4896-SPAC1834.09.1"/>
<dbReference type="EnsemblFungi" id="SPAC1834.09.1">
    <property type="protein sequence ID" value="SPAC1834.09.1:pep"/>
    <property type="gene ID" value="SPAC1834.09"/>
</dbReference>
<dbReference type="GeneID" id="2542159"/>
<dbReference type="KEGG" id="spo:2542159"/>
<dbReference type="PomBase" id="SPAC1834.09">
    <property type="gene designation" value="mug51"/>
</dbReference>
<dbReference type="VEuPathDB" id="FungiDB:SPAC1834.09"/>
<dbReference type="HOGENOM" id="CLU_909615_0_0_1"/>
<dbReference type="InParanoid" id="Q9P7Q6"/>
<dbReference type="OMA" id="FFGWKFR"/>
<dbReference type="PhylomeDB" id="Q9P7Q6"/>
<dbReference type="PRO" id="PR:Q9P7Q6"/>
<dbReference type="Proteomes" id="UP000002485">
    <property type="component" value="Chromosome I"/>
</dbReference>
<dbReference type="GO" id="GO:0005634">
    <property type="term" value="C:nucleus"/>
    <property type="evidence" value="ECO:0000250"/>
    <property type="project" value="PomBase"/>
</dbReference>
<dbReference type="GO" id="GO:0005524">
    <property type="term" value="F:ATP binding"/>
    <property type="evidence" value="ECO:0007669"/>
    <property type="project" value="UniProtKB-KW"/>
</dbReference>
<dbReference type="GO" id="GO:0106310">
    <property type="term" value="F:protein serine kinase activity"/>
    <property type="evidence" value="ECO:0007669"/>
    <property type="project" value="RHEA"/>
</dbReference>
<dbReference type="GO" id="GO:0004674">
    <property type="term" value="F:protein serine/threonine kinase activity"/>
    <property type="evidence" value="ECO:0007669"/>
    <property type="project" value="UniProtKB-KW"/>
</dbReference>
<dbReference type="GO" id="GO:0051321">
    <property type="term" value="P:meiotic cell cycle"/>
    <property type="evidence" value="ECO:0007669"/>
    <property type="project" value="UniProtKB-KW"/>
</dbReference>
<dbReference type="GO" id="GO:0046579">
    <property type="term" value="P:positive regulation of Ras protein signal transduction"/>
    <property type="evidence" value="ECO:0000318"/>
    <property type="project" value="GO_Central"/>
</dbReference>
<dbReference type="GO" id="GO:0006283">
    <property type="term" value="P:transcription-coupled nucleotide-excision repair"/>
    <property type="evidence" value="ECO:0000304"/>
    <property type="project" value="PomBase"/>
</dbReference>
<dbReference type="InterPro" id="IPR018865">
    <property type="entry name" value="STK19-like"/>
</dbReference>
<dbReference type="PANTHER" id="PTHR15243">
    <property type="entry name" value="SERINE/THREONINE-PROTEIN KINASE 19"/>
    <property type="match status" value="1"/>
</dbReference>
<dbReference type="PANTHER" id="PTHR15243:SF0">
    <property type="entry name" value="SERINE_THREONINE-PROTEIN KINASE 19"/>
    <property type="match status" value="1"/>
</dbReference>
<dbReference type="Pfam" id="PF10494">
    <property type="entry name" value="Stk19"/>
    <property type="match status" value="1"/>
</dbReference>
<reference key="1">
    <citation type="journal article" date="2002" name="Nature">
        <title>The genome sequence of Schizosaccharomyces pombe.</title>
        <authorList>
            <person name="Wood V."/>
            <person name="Gwilliam R."/>
            <person name="Rajandream M.A."/>
            <person name="Lyne M.H."/>
            <person name="Lyne R."/>
            <person name="Stewart A."/>
            <person name="Sgouros J.G."/>
            <person name="Peat N."/>
            <person name="Hayles J."/>
            <person name="Baker S.G."/>
            <person name="Basham D."/>
            <person name="Bowman S."/>
            <person name="Brooks K."/>
            <person name="Brown D."/>
            <person name="Brown S."/>
            <person name="Chillingworth T."/>
            <person name="Churcher C.M."/>
            <person name="Collins M."/>
            <person name="Connor R."/>
            <person name="Cronin A."/>
            <person name="Davis P."/>
            <person name="Feltwell T."/>
            <person name="Fraser A."/>
            <person name="Gentles S."/>
            <person name="Goble A."/>
            <person name="Hamlin N."/>
            <person name="Harris D.E."/>
            <person name="Hidalgo J."/>
            <person name="Hodgson G."/>
            <person name="Holroyd S."/>
            <person name="Hornsby T."/>
            <person name="Howarth S."/>
            <person name="Huckle E.J."/>
            <person name="Hunt S."/>
            <person name="Jagels K."/>
            <person name="James K.D."/>
            <person name="Jones L."/>
            <person name="Jones M."/>
            <person name="Leather S."/>
            <person name="McDonald S."/>
            <person name="McLean J."/>
            <person name="Mooney P."/>
            <person name="Moule S."/>
            <person name="Mungall K.L."/>
            <person name="Murphy L.D."/>
            <person name="Niblett D."/>
            <person name="Odell C."/>
            <person name="Oliver K."/>
            <person name="O'Neil S."/>
            <person name="Pearson D."/>
            <person name="Quail M.A."/>
            <person name="Rabbinowitsch E."/>
            <person name="Rutherford K.M."/>
            <person name="Rutter S."/>
            <person name="Saunders D."/>
            <person name="Seeger K."/>
            <person name="Sharp S."/>
            <person name="Skelton J."/>
            <person name="Simmonds M.N."/>
            <person name="Squares R."/>
            <person name="Squares S."/>
            <person name="Stevens K."/>
            <person name="Taylor K."/>
            <person name="Taylor R.G."/>
            <person name="Tivey A."/>
            <person name="Walsh S.V."/>
            <person name="Warren T."/>
            <person name="Whitehead S."/>
            <person name="Woodward J.R."/>
            <person name="Volckaert G."/>
            <person name="Aert R."/>
            <person name="Robben J."/>
            <person name="Grymonprez B."/>
            <person name="Weltjens I."/>
            <person name="Vanstreels E."/>
            <person name="Rieger M."/>
            <person name="Schaefer M."/>
            <person name="Mueller-Auer S."/>
            <person name="Gabel C."/>
            <person name="Fuchs M."/>
            <person name="Duesterhoeft A."/>
            <person name="Fritzc C."/>
            <person name="Holzer E."/>
            <person name="Moestl D."/>
            <person name="Hilbert H."/>
            <person name="Borzym K."/>
            <person name="Langer I."/>
            <person name="Beck A."/>
            <person name="Lehrach H."/>
            <person name="Reinhardt R."/>
            <person name="Pohl T.M."/>
            <person name="Eger P."/>
            <person name="Zimmermann W."/>
            <person name="Wedler H."/>
            <person name="Wambutt R."/>
            <person name="Purnelle B."/>
            <person name="Goffeau A."/>
            <person name="Cadieu E."/>
            <person name="Dreano S."/>
            <person name="Gloux S."/>
            <person name="Lelaure V."/>
            <person name="Mottier S."/>
            <person name="Galibert F."/>
            <person name="Aves S.J."/>
            <person name="Xiang Z."/>
            <person name="Hunt C."/>
            <person name="Moore K."/>
            <person name="Hurst S.M."/>
            <person name="Lucas M."/>
            <person name="Rochet M."/>
            <person name="Gaillardin C."/>
            <person name="Tallada V.A."/>
            <person name="Garzon A."/>
            <person name="Thode G."/>
            <person name="Daga R.R."/>
            <person name="Cruzado L."/>
            <person name="Jimenez J."/>
            <person name="Sanchez M."/>
            <person name="del Rey F."/>
            <person name="Benito J."/>
            <person name="Dominguez A."/>
            <person name="Revuelta J.L."/>
            <person name="Moreno S."/>
            <person name="Armstrong J."/>
            <person name="Forsburg S.L."/>
            <person name="Cerutti L."/>
            <person name="Lowe T."/>
            <person name="McCombie W.R."/>
            <person name="Paulsen I."/>
            <person name="Potashkin J."/>
            <person name="Shpakovski G.V."/>
            <person name="Ussery D."/>
            <person name="Barrell B.G."/>
            <person name="Nurse P."/>
        </authorList>
    </citation>
    <scope>NUCLEOTIDE SEQUENCE [LARGE SCALE GENOMIC DNA]</scope>
    <source>
        <strain>972 / ATCC 24843</strain>
    </source>
</reference>
<reference key="2">
    <citation type="journal article" date="2005" name="Curr. Biol.">
        <title>A large-scale screen in S. pombe identifies seven novel genes required for critical meiotic events.</title>
        <authorList>
            <person name="Martin-Castellanos C."/>
            <person name="Blanco M."/>
            <person name="Rozalen A.E."/>
            <person name="Perez-Hidalgo L."/>
            <person name="Garcia A.I."/>
            <person name="Conde F."/>
            <person name="Mata J."/>
            <person name="Ellermeier C."/>
            <person name="Davis L."/>
            <person name="San-Segundo P."/>
            <person name="Smith G.R."/>
            <person name="Moreno S."/>
        </authorList>
    </citation>
    <scope>FUNCTION IN MEIOSIS</scope>
</reference>